<keyword id="KW-1003">Cell membrane</keyword>
<keyword id="KW-0175">Coiled coil</keyword>
<keyword id="KW-0472">Membrane</keyword>
<keyword id="KW-0812">Transmembrane</keyword>
<keyword id="KW-1133">Transmembrane helix</keyword>
<keyword id="KW-0843">Virulence</keyword>
<accession>Q6GK25</accession>
<gene>
    <name evidence="2" type="primary">essB</name>
    <name type="ordered locus">SAR0283</name>
</gene>
<protein>
    <recommendedName>
        <fullName evidence="2">Type VII secretion system protein EssB</fullName>
    </recommendedName>
</protein>
<proteinExistence type="inferred from homology"/>
<dbReference type="EMBL" id="BX571856">
    <property type="protein sequence ID" value="CAG39310.1"/>
    <property type="molecule type" value="Genomic_DNA"/>
</dbReference>
<dbReference type="RefSeq" id="WP_000240329.1">
    <property type="nucleotide sequence ID" value="NC_002952.2"/>
</dbReference>
<dbReference type="SMR" id="Q6GK25"/>
<dbReference type="KEGG" id="sar:SAR0283"/>
<dbReference type="HOGENOM" id="CLU_049737_0_0_9"/>
<dbReference type="Proteomes" id="UP000000596">
    <property type="component" value="Chromosome"/>
</dbReference>
<dbReference type="GO" id="GO:0005886">
    <property type="term" value="C:plasma membrane"/>
    <property type="evidence" value="ECO:0007669"/>
    <property type="project" value="UniProtKB-SubCell"/>
</dbReference>
<dbReference type="Gene3D" id="1.10.510.10">
    <property type="entry name" value="Transferase(Phosphotransferase) domain 1"/>
    <property type="match status" value="1"/>
</dbReference>
<dbReference type="Gene3D" id="1.25.40.680">
    <property type="entry name" value="Type VII secretion system EssB, C-terminal-like domain"/>
    <property type="match status" value="1"/>
</dbReference>
<dbReference type="InterPro" id="IPR018778">
    <property type="entry name" value="T7SS_EssB"/>
</dbReference>
<dbReference type="InterPro" id="IPR042565">
    <property type="entry name" value="T7SS_EssB_C"/>
</dbReference>
<dbReference type="NCBIfam" id="TIGR03926">
    <property type="entry name" value="T7_EssB"/>
    <property type="match status" value="1"/>
</dbReference>
<dbReference type="Pfam" id="PF10140">
    <property type="entry name" value="YukC"/>
    <property type="match status" value="1"/>
</dbReference>
<feature type="chain" id="PRO_0000087065" description="Type VII secretion system protein EssB">
    <location>
        <begin position="1"/>
        <end position="444"/>
    </location>
</feature>
<feature type="topological domain" description="Cytoplasmic" evidence="2">
    <location>
        <begin position="1"/>
        <end position="229"/>
    </location>
</feature>
<feature type="transmembrane region" description="Helical" evidence="3">
    <location>
        <begin position="230"/>
        <end position="250"/>
    </location>
</feature>
<feature type="topological domain" description="Extracellular" evidence="2">
    <location>
        <begin position="251"/>
        <end position="444"/>
    </location>
</feature>
<feature type="region of interest" description="Disordered" evidence="4">
    <location>
        <begin position="366"/>
        <end position="444"/>
    </location>
</feature>
<feature type="coiled-coil region" evidence="3">
    <location>
        <begin position="387"/>
        <end position="443"/>
    </location>
</feature>
<feature type="compositionally biased region" description="Basic and acidic residues" evidence="4">
    <location>
        <begin position="372"/>
        <end position="444"/>
    </location>
</feature>
<comment type="function">
    <text evidence="1">Component of the type VII secretion system (Ess). Required for the secretion of EsxA.</text>
</comment>
<comment type="subcellular location">
    <subcellularLocation>
        <location evidence="2">Cell membrane</location>
        <topology evidence="3">Single-pass membrane protein</topology>
    </subcellularLocation>
</comment>
<comment type="miscellaneous">
    <text evidence="5">This strain lacks esxB and esxC.</text>
</comment>
<comment type="similarity">
    <text evidence="5">Belongs to the EssB family.</text>
</comment>
<sequence>MVKNHDPKNEMQDMLTPLDAEEAAKTKLRLDMREIPKSSIKPEHFHLMYLLEQHSPYFIDAELTELRDSFQIHYDINDNHTPFDNIKSFTKNEKLRYLLNIKNLEEVNRTRYTFVLAPDELFFTRDGLPIAKTRGLQNVVDPLPVSEAEFLTRYKALVICAFNEKQSFDALVEGNLELHKGTPFETKVIEAATLDLLTAFLDEQYQKQEQDYSQNYAYVRKVGHTVFKWVAIGMTTLSVLLIAFLAFLYFSVMKHNERIEKGYQAFVKEDYTQVLNTYDDLDGKKLDKEALYIYAKSYIQTNKQGLEKDKKENLLNNVTPNSNKDYLLYWMELGQGHLDEAINIATYLDDNDITKLALINKLNEIKNNGDLSNDKRSEETKKYNDKLQDILDKEKQVKDEKAKSEEEKAKAKDEKLKQQEENEKKQKEQAQKDKEKRQEAERKK</sequence>
<name>ESSB_STAAR</name>
<organism>
    <name type="scientific">Staphylococcus aureus (strain MRSA252)</name>
    <dbReference type="NCBI Taxonomy" id="282458"/>
    <lineage>
        <taxon>Bacteria</taxon>
        <taxon>Bacillati</taxon>
        <taxon>Bacillota</taxon>
        <taxon>Bacilli</taxon>
        <taxon>Bacillales</taxon>
        <taxon>Staphylococcaceae</taxon>
        <taxon>Staphylococcus</taxon>
    </lineage>
</organism>
<reference key="1">
    <citation type="journal article" date="2004" name="Proc. Natl. Acad. Sci. U.S.A.">
        <title>Complete genomes of two clinical Staphylococcus aureus strains: evidence for the rapid evolution of virulence and drug resistance.</title>
        <authorList>
            <person name="Holden M.T.G."/>
            <person name="Feil E.J."/>
            <person name="Lindsay J.A."/>
            <person name="Peacock S.J."/>
            <person name="Day N.P.J."/>
            <person name="Enright M.C."/>
            <person name="Foster T.J."/>
            <person name="Moore C.E."/>
            <person name="Hurst L."/>
            <person name="Atkin R."/>
            <person name="Barron A."/>
            <person name="Bason N."/>
            <person name="Bentley S.D."/>
            <person name="Chillingworth C."/>
            <person name="Chillingworth T."/>
            <person name="Churcher C."/>
            <person name="Clark L."/>
            <person name="Corton C."/>
            <person name="Cronin A."/>
            <person name="Doggett J."/>
            <person name="Dowd L."/>
            <person name="Feltwell T."/>
            <person name="Hance Z."/>
            <person name="Harris B."/>
            <person name="Hauser H."/>
            <person name="Holroyd S."/>
            <person name="Jagels K."/>
            <person name="James K.D."/>
            <person name="Lennard N."/>
            <person name="Line A."/>
            <person name="Mayes R."/>
            <person name="Moule S."/>
            <person name="Mungall K."/>
            <person name="Ormond D."/>
            <person name="Quail M.A."/>
            <person name="Rabbinowitsch E."/>
            <person name="Rutherford K.M."/>
            <person name="Sanders M."/>
            <person name="Sharp S."/>
            <person name="Simmonds M."/>
            <person name="Stevens K."/>
            <person name="Whitehead S."/>
            <person name="Barrell B.G."/>
            <person name="Spratt B.G."/>
            <person name="Parkhill J."/>
        </authorList>
    </citation>
    <scope>NUCLEOTIDE SEQUENCE [LARGE SCALE GENOMIC DNA]</scope>
    <source>
        <strain>MRSA252</strain>
    </source>
</reference>
<evidence type="ECO:0000250" key="1">
    <source>
        <dbReference type="UniProtKB" id="P0C053"/>
    </source>
</evidence>
<evidence type="ECO:0000250" key="2">
    <source>
        <dbReference type="UniProtKB" id="Q2G185"/>
    </source>
</evidence>
<evidence type="ECO:0000255" key="3"/>
<evidence type="ECO:0000256" key="4">
    <source>
        <dbReference type="SAM" id="MobiDB-lite"/>
    </source>
</evidence>
<evidence type="ECO:0000305" key="5"/>